<proteinExistence type="evidence at protein level"/>
<name>PDIP2_HUMAN</name>
<keyword id="KW-0002">3D-structure</keyword>
<keyword id="KW-0227">DNA damage</keyword>
<keyword id="KW-0234">DNA repair</keyword>
<keyword id="KW-0496">Mitochondrion</keyword>
<keyword id="KW-0539">Nucleus</keyword>
<keyword id="KW-0597">Phosphoprotein</keyword>
<keyword id="KW-1267">Proteomics identification</keyword>
<keyword id="KW-1185">Reference proteome</keyword>
<keyword id="KW-0809">Transit peptide</keyword>
<comment type="function">
    <text evidence="6 7">Involved in DNA damage tolerance by regulating translesion synthesis (TLS) of templates carrying DNA damage lesions such as 8oxoG and abasic sites (PubMed:24191025). May act by stimulating activity of DNA polymerases involved in TLS, such as PRIMPOL and polymerase delta (POLD1) (PubMed:24191025, PubMed:26984527).</text>
</comment>
<comment type="subunit">
    <text evidence="3 4 5 6 7">Interacts with PCNA and POLD2 (PubMed:12522211). Interacts with SSBP1 (PubMed:16428295). Interacts with PRIMPOL; leading to enhance DNA polymerase activity of PRIMPOL (PubMed:26984527). Interacts with POLH (PubMed:20554254). Interacts with POLD1; leading to stimulate DNA polymerase activity of POLD1 (PubMed:24191025).</text>
</comment>
<comment type="interaction">
    <interactant intactId="EBI-713000">
        <id>Q9Y2S7</id>
    </interactant>
    <interactant intactId="EBI-11522760">
        <id>Q6RW13-2</id>
        <label>AGTRAP</label>
    </interactant>
    <organismsDiffer>false</organismsDiffer>
    <experiments>3</experiments>
</comment>
<comment type="interaction">
    <interactant intactId="EBI-713000">
        <id>Q9Y2S7</id>
    </interactant>
    <interactant intactId="EBI-3905054">
        <id>P13196</id>
        <label>ALAS1</label>
    </interactant>
    <organismsDiffer>false</organismsDiffer>
    <experiments>4</experiments>
</comment>
<comment type="interaction">
    <interactant intactId="EBI-713000">
        <id>Q9Y2S7</id>
    </interactant>
    <interactant intactId="EBI-2321769">
        <id>Q9Y6H1</id>
        <label>CHCHD2</label>
    </interactant>
    <organismsDiffer>false</organismsDiffer>
    <experiments>8</experiments>
</comment>
<comment type="interaction">
    <interactant intactId="EBI-713000">
        <id>Q9Y2S7</id>
    </interactant>
    <interactant intactId="EBI-10239299">
        <id>Q9NQM4</id>
        <label>DNAAF6</label>
    </interactant>
    <organismsDiffer>false</organismsDiffer>
    <experiments>3</experiments>
</comment>
<comment type="interaction">
    <interactant intactId="EBI-713000">
        <id>Q9Y2S7</id>
    </interactant>
    <interactant intactId="EBI-742948">
        <id>Q5JR59</id>
        <label>MTUS2</label>
    </interactant>
    <organismsDiffer>false</organismsDiffer>
    <experiments>3</experiments>
</comment>
<comment type="subcellular location">
    <subcellularLocation>
        <location evidence="4">Mitochondrion matrix</location>
    </subcellularLocation>
    <subcellularLocation>
        <location evidence="4">Nucleus</location>
    </subcellularLocation>
    <text evidence="4">Mainly localizes to the mitochondrial matrix; a small fraction localizes in the nucleus.</text>
</comment>
<organism>
    <name type="scientific">Homo sapiens</name>
    <name type="common">Human</name>
    <dbReference type="NCBI Taxonomy" id="9606"/>
    <lineage>
        <taxon>Eukaryota</taxon>
        <taxon>Metazoa</taxon>
        <taxon>Chordata</taxon>
        <taxon>Craniata</taxon>
        <taxon>Vertebrata</taxon>
        <taxon>Euteleostomi</taxon>
        <taxon>Mammalia</taxon>
        <taxon>Eutheria</taxon>
        <taxon>Euarchontoglires</taxon>
        <taxon>Primates</taxon>
        <taxon>Haplorrhini</taxon>
        <taxon>Catarrhini</taxon>
        <taxon>Hominidae</taxon>
        <taxon>Homo</taxon>
    </lineage>
</organism>
<gene>
    <name evidence="10 12" type="primary">POLDIP2</name>
    <name evidence="8 9" type="synonym">PDIP38</name>
    <name type="synonym">POLD4</name>
    <name type="ORF">HSPC017</name>
</gene>
<accession>Q9Y2S7</accession>
<accession>B2R846</accession>
<accession>Q96JE4</accession>
<evidence type="ECO:0000255" key="1"/>
<evidence type="ECO:0000255" key="2">
    <source>
        <dbReference type="PROSITE-ProRule" id="PRU00412"/>
    </source>
</evidence>
<evidence type="ECO:0000269" key="3">
    <source>
    </source>
</evidence>
<evidence type="ECO:0000269" key="4">
    <source>
    </source>
</evidence>
<evidence type="ECO:0000269" key="5">
    <source>
    </source>
</evidence>
<evidence type="ECO:0000269" key="6">
    <source>
    </source>
</evidence>
<evidence type="ECO:0000269" key="7">
    <source>
    </source>
</evidence>
<evidence type="ECO:0000303" key="8">
    <source>
    </source>
</evidence>
<evidence type="ECO:0000303" key="9">
    <source>
    </source>
</evidence>
<evidence type="ECO:0000303" key="10">
    <source>
    </source>
</evidence>
<evidence type="ECO:0000305" key="11"/>
<evidence type="ECO:0000312" key="12">
    <source>
        <dbReference type="HGNC" id="HGNC:23781"/>
    </source>
</evidence>
<evidence type="ECO:0007744" key="13">
    <source>
    </source>
</evidence>
<evidence type="ECO:0007829" key="14">
    <source>
        <dbReference type="PDB" id="6Z9C"/>
    </source>
</evidence>
<evidence type="ECO:0007829" key="15">
    <source>
        <dbReference type="PDB" id="6ZLX"/>
    </source>
</evidence>
<reference key="1">
    <citation type="journal article" date="2003" name="J. Biol. Chem.">
        <title>Identification of a novel protein, PDIP38, that interacts with the p50 subunit of DNA polymerase delta and proliferating cell nuclear antigen.</title>
        <authorList>
            <person name="Liu L."/>
            <person name="Rodriguez-Belmonte E.M."/>
            <person name="Mazloum N."/>
            <person name="Xie B."/>
            <person name="Lee M.Y.W.T."/>
        </authorList>
    </citation>
    <scope>NUCLEOTIDE SEQUENCE [MRNA]</scope>
    <scope>INTERACTION WITH PCNA AND POLD2</scope>
    <source>
        <tissue>Placenta</tissue>
    </source>
</reference>
<reference key="2">
    <citation type="journal article" date="2000" name="Genome Res.">
        <title>Cloning and functional analysis of cDNAs with open reading frames for 300 previously undefined genes expressed in CD34+ hematopoietic stem/progenitor cells.</title>
        <authorList>
            <person name="Zhang Q.-H."/>
            <person name="Ye M."/>
            <person name="Wu X.-Y."/>
            <person name="Ren S.-X."/>
            <person name="Zhao M."/>
            <person name="Zhao C.-J."/>
            <person name="Fu G."/>
            <person name="Shen Y."/>
            <person name="Fan H.-Y."/>
            <person name="Lu G."/>
            <person name="Zhong M."/>
            <person name="Xu X.-R."/>
            <person name="Han Z.-G."/>
            <person name="Zhang J.-W."/>
            <person name="Tao J."/>
            <person name="Huang Q.-H."/>
            <person name="Zhou J."/>
            <person name="Hu G.-X."/>
            <person name="Gu J."/>
            <person name="Chen S.-J."/>
            <person name="Chen Z."/>
        </authorList>
    </citation>
    <scope>NUCLEOTIDE SEQUENCE [LARGE SCALE MRNA]</scope>
    <source>
        <tissue>Umbilical cord blood</tissue>
    </source>
</reference>
<reference key="3">
    <citation type="journal article" date="2004" name="Nat. Genet.">
        <title>Complete sequencing and characterization of 21,243 full-length human cDNAs.</title>
        <authorList>
            <person name="Ota T."/>
            <person name="Suzuki Y."/>
            <person name="Nishikawa T."/>
            <person name="Otsuki T."/>
            <person name="Sugiyama T."/>
            <person name="Irie R."/>
            <person name="Wakamatsu A."/>
            <person name="Hayashi K."/>
            <person name="Sato H."/>
            <person name="Nagai K."/>
            <person name="Kimura K."/>
            <person name="Makita H."/>
            <person name="Sekine M."/>
            <person name="Obayashi M."/>
            <person name="Nishi T."/>
            <person name="Shibahara T."/>
            <person name="Tanaka T."/>
            <person name="Ishii S."/>
            <person name="Yamamoto J."/>
            <person name="Saito K."/>
            <person name="Kawai Y."/>
            <person name="Isono Y."/>
            <person name="Nakamura Y."/>
            <person name="Nagahari K."/>
            <person name="Murakami K."/>
            <person name="Yasuda T."/>
            <person name="Iwayanagi T."/>
            <person name="Wagatsuma M."/>
            <person name="Shiratori A."/>
            <person name="Sudo H."/>
            <person name="Hosoiri T."/>
            <person name="Kaku Y."/>
            <person name="Kodaira H."/>
            <person name="Kondo H."/>
            <person name="Sugawara M."/>
            <person name="Takahashi M."/>
            <person name="Kanda K."/>
            <person name="Yokoi T."/>
            <person name="Furuya T."/>
            <person name="Kikkawa E."/>
            <person name="Omura Y."/>
            <person name="Abe K."/>
            <person name="Kamihara K."/>
            <person name="Katsuta N."/>
            <person name="Sato K."/>
            <person name="Tanikawa M."/>
            <person name="Yamazaki M."/>
            <person name="Ninomiya K."/>
            <person name="Ishibashi T."/>
            <person name="Yamashita H."/>
            <person name="Murakawa K."/>
            <person name="Fujimori K."/>
            <person name="Tanai H."/>
            <person name="Kimata M."/>
            <person name="Watanabe M."/>
            <person name="Hiraoka S."/>
            <person name="Chiba Y."/>
            <person name="Ishida S."/>
            <person name="Ono Y."/>
            <person name="Takiguchi S."/>
            <person name="Watanabe S."/>
            <person name="Yosida M."/>
            <person name="Hotuta T."/>
            <person name="Kusano J."/>
            <person name="Kanehori K."/>
            <person name="Takahashi-Fujii A."/>
            <person name="Hara H."/>
            <person name="Tanase T.-O."/>
            <person name="Nomura Y."/>
            <person name="Togiya S."/>
            <person name="Komai F."/>
            <person name="Hara R."/>
            <person name="Takeuchi K."/>
            <person name="Arita M."/>
            <person name="Imose N."/>
            <person name="Musashino K."/>
            <person name="Yuuki H."/>
            <person name="Oshima A."/>
            <person name="Sasaki N."/>
            <person name="Aotsuka S."/>
            <person name="Yoshikawa Y."/>
            <person name="Matsunawa H."/>
            <person name="Ichihara T."/>
            <person name="Shiohata N."/>
            <person name="Sano S."/>
            <person name="Moriya S."/>
            <person name="Momiyama H."/>
            <person name="Satoh N."/>
            <person name="Takami S."/>
            <person name="Terashima Y."/>
            <person name="Suzuki O."/>
            <person name="Nakagawa S."/>
            <person name="Senoh A."/>
            <person name="Mizoguchi H."/>
            <person name="Goto Y."/>
            <person name="Shimizu F."/>
            <person name="Wakebe H."/>
            <person name="Hishigaki H."/>
            <person name="Watanabe T."/>
            <person name="Sugiyama A."/>
            <person name="Takemoto M."/>
            <person name="Kawakami B."/>
            <person name="Yamazaki M."/>
            <person name="Watanabe K."/>
            <person name="Kumagai A."/>
            <person name="Itakura S."/>
            <person name="Fukuzumi Y."/>
            <person name="Fujimori Y."/>
            <person name="Komiyama M."/>
            <person name="Tashiro H."/>
            <person name="Tanigami A."/>
            <person name="Fujiwara T."/>
            <person name="Ono T."/>
            <person name="Yamada K."/>
            <person name="Fujii Y."/>
            <person name="Ozaki K."/>
            <person name="Hirao M."/>
            <person name="Ohmori Y."/>
            <person name="Kawabata A."/>
            <person name="Hikiji T."/>
            <person name="Kobatake N."/>
            <person name="Inagaki H."/>
            <person name="Ikema Y."/>
            <person name="Okamoto S."/>
            <person name="Okitani R."/>
            <person name="Kawakami T."/>
            <person name="Noguchi S."/>
            <person name="Itoh T."/>
            <person name="Shigeta K."/>
            <person name="Senba T."/>
            <person name="Matsumura K."/>
            <person name="Nakajima Y."/>
            <person name="Mizuno T."/>
            <person name="Morinaga M."/>
            <person name="Sasaki M."/>
            <person name="Togashi T."/>
            <person name="Oyama M."/>
            <person name="Hata H."/>
            <person name="Watanabe M."/>
            <person name="Komatsu T."/>
            <person name="Mizushima-Sugano J."/>
            <person name="Satoh T."/>
            <person name="Shirai Y."/>
            <person name="Takahashi Y."/>
            <person name="Nakagawa K."/>
            <person name="Okumura K."/>
            <person name="Nagase T."/>
            <person name="Nomura N."/>
            <person name="Kikuchi H."/>
            <person name="Masuho Y."/>
            <person name="Yamashita R."/>
            <person name="Nakai K."/>
            <person name="Yada T."/>
            <person name="Nakamura Y."/>
            <person name="Ohara O."/>
            <person name="Isogai T."/>
            <person name="Sugano S."/>
        </authorList>
    </citation>
    <scope>NUCLEOTIDE SEQUENCE [LARGE SCALE MRNA]</scope>
</reference>
<reference key="4">
    <citation type="journal article" date="2004" name="Genome Res.">
        <title>The status, quality, and expansion of the NIH full-length cDNA project: the Mammalian Gene Collection (MGC).</title>
        <authorList>
            <consortium name="The MGC Project Team"/>
        </authorList>
    </citation>
    <scope>NUCLEOTIDE SEQUENCE [LARGE SCALE MRNA]</scope>
    <source>
        <tissue>Colon</tissue>
        <tissue>Lung</tissue>
    </source>
</reference>
<reference key="5">
    <citation type="journal article" date="2005" name="J. Biochem.">
        <title>PDIP38 associates with proteins constituting the mitochondrial DNA nucleoid.</title>
        <authorList>
            <person name="Cheng X."/>
            <person name="Kanki T."/>
            <person name="Fukuoh A."/>
            <person name="Ohgaki K."/>
            <person name="Takeya R."/>
            <person name="Aoki Y."/>
            <person name="Hamasaki N."/>
            <person name="Kang D."/>
        </authorList>
    </citation>
    <scope>SUBCELLULAR LOCATION</scope>
    <scope>INTERACTION WITH SSBP1</scope>
</reference>
<reference key="6">
    <citation type="journal article" date="2010" name="DNA Repair">
        <title>Crosstalk between replicative and translesional DNA polymerases: PDIP38 interacts directly with Poleta.</title>
        <authorList>
            <person name="Tissier A."/>
            <person name="Janel-Bintz R."/>
            <person name="Coulon S."/>
            <person name="Klaile E."/>
            <person name="Kannouche P."/>
            <person name="Fuchs R.P."/>
            <person name="Cordonnier A.M."/>
        </authorList>
    </citation>
    <scope>INTERACTION WITH POLH</scope>
</reference>
<reference key="7">
    <citation type="journal article" date="2013" name="Proc. Natl. Acad. Sci. U.S.A.">
        <title>DNA polymerase delta-interacting protein 2 is a processivity factor for DNA polymerase lambda during 8-oxo-7,8-dihydroguanine bypass.</title>
        <authorList>
            <person name="Maga G."/>
            <person name="Crespan E."/>
            <person name="Markkanen E."/>
            <person name="Imhof R."/>
            <person name="Furrer A."/>
            <person name="Villani G."/>
            <person name="Huebscher U."/>
            <person name="van Loon B."/>
        </authorList>
    </citation>
    <scope>FUNCTION</scope>
    <scope>INTERACTION WITH POLD1</scope>
</reference>
<reference key="8">
    <citation type="journal article" date="2011" name="BMC Syst. Biol.">
        <title>Initial characterization of the human central proteome.</title>
        <authorList>
            <person name="Burkard T.R."/>
            <person name="Planyavsky M."/>
            <person name="Kaupe I."/>
            <person name="Breitwieser F.P."/>
            <person name="Buerckstuemmer T."/>
            <person name="Bennett K.L."/>
            <person name="Superti-Furga G."/>
            <person name="Colinge J."/>
        </authorList>
    </citation>
    <scope>IDENTIFICATION BY MASS SPECTROMETRY [LARGE SCALE ANALYSIS]</scope>
</reference>
<reference key="9">
    <citation type="journal article" date="2013" name="J. Proteome Res.">
        <title>Toward a comprehensive characterization of a human cancer cell phosphoproteome.</title>
        <authorList>
            <person name="Zhou H."/>
            <person name="Di Palma S."/>
            <person name="Preisinger C."/>
            <person name="Peng M."/>
            <person name="Polat A.N."/>
            <person name="Heck A.J."/>
            <person name="Mohammed S."/>
        </authorList>
    </citation>
    <scope>PHOSPHORYLATION [LARGE SCALE ANALYSIS] AT THR-292</scope>
    <scope>IDENTIFICATION BY MASS SPECTROMETRY [LARGE SCALE ANALYSIS]</scope>
    <source>
        <tissue>Cervix carcinoma</tissue>
        <tissue>Erythroleukemia</tissue>
    </source>
</reference>
<reference key="10">
    <citation type="journal article" date="2014" name="J. Proteomics">
        <title>An enzyme assisted RP-RPLC approach for in-depth analysis of human liver phosphoproteome.</title>
        <authorList>
            <person name="Bian Y."/>
            <person name="Song C."/>
            <person name="Cheng K."/>
            <person name="Dong M."/>
            <person name="Wang F."/>
            <person name="Huang J."/>
            <person name="Sun D."/>
            <person name="Wang L."/>
            <person name="Ye M."/>
            <person name="Zou H."/>
        </authorList>
    </citation>
    <scope>IDENTIFICATION BY MASS SPECTROMETRY [LARGE SCALE ANALYSIS]</scope>
    <source>
        <tissue>Liver</tissue>
    </source>
</reference>
<reference key="11">
    <citation type="journal article" date="2015" name="Proteomics">
        <title>N-terminome analysis of the human mitochondrial proteome.</title>
        <authorList>
            <person name="Vaca Jacome A.S."/>
            <person name="Rabilloud T."/>
            <person name="Schaeffer-Reiss C."/>
            <person name="Rompais M."/>
            <person name="Ayoub D."/>
            <person name="Lane L."/>
            <person name="Bairoch A."/>
            <person name="Van Dorsselaer A."/>
            <person name="Carapito C."/>
        </authorList>
    </citation>
    <scope>IDENTIFICATION BY MASS SPECTROMETRY [LARGE SCALE ANALYSIS]</scope>
</reference>
<reference key="12">
    <citation type="journal article" date="2016" name="Nucleic Acids Res.">
        <title>PolDIP2 interacts with human PrimPol and enhances its DNA polymerase activities.</title>
        <authorList>
            <person name="Guilliam T.A."/>
            <person name="Bailey L.J."/>
            <person name="Brissett N.C."/>
            <person name="Doherty A.J."/>
        </authorList>
    </citation>
    <scope>FUNCTION</scope>
    <scope>INTERACTION WITH PRIMPOL</scope>
</reference>
<sequence length="368" mass="42033">MAACTARRALAVGSRWWSRSLTGARWPRPLCAAAGAGAFSPASTTTTRRHLSSRNRPEGKVLETVGVFEVPKQNGKYETGQLFLHSIFGYRGVVLFPWQARLYDRDVASAAPEKAENPAGHGSKEVKGKTHTYYQVLIDARDCPHISQRSQTEAVTFLANHDDSRALYAIPGLDYVSHEDILPYTSTDQVPIQHELFERFLLYDQTKAPPFVARETLRAWQEKNHPWLELSDVHRETTENIRVTVIPFYMGMREAQNSHVYWWRYCIRLENLDSDVVQLRERHWRIFSLSGTLETVRGRGVVGREPVLSKEQPAFQYSSHVSLQASSGHMWGTFRFERPDGSHFDVRIPPFSLESNKDEKTPPSGLHW</sequence>
<protein>
    <recommendedName>
        <fullName evidence="10">Polymerase delta-interacting protein 2</fullName>
    </recommendedName>
    <alternativeName>
        <fullName evidence="8">38 kDa DNA polymerase delta interaction protein</fullName>
        <shortName evidence="8">p38</shortName>
    </alternativeName>
</protein>
<feature type="transit peptide" description="Mitochondrion" evidence="1">
    <location>
        <begin position="1"/>
        <end position="51"/>
    </location>
</feature>
<feature type="chain" id="PRO_0000197975" description="Polymerase delta-interacting protein 2" evidence="1">
    <location>
        <begin position="52"/>
        <end position="368"/>
    </location>
</feature>
<feature type="domain" description="ApaG" evidence="2">
    <location>
        <begin position="235"/>
        <end position="360"/>
    </location>
</feature>
<feature type="modified residue" description="Phosphothreonine" evidence="13">
    <location>
        <position position="292"/>
    </location>
</feature>
<feature type="sequence conflict" description="In Ref. 1; AAK92018." evidence="11" ref="1">
    <original>A</original>
    <variation>P</variation>
    <location>
        <position position="9"/>
    </location>
</feature>
<feature type="sequence conflict" description="In Ref. 1; AAK92018." evidence="11" ref="1">
    <original>R</original>
    <variation>K</variation>
    <location>
        <position position="28"/>
    </location>
</feature>
<feature type="strand" evidence="14">
    <location>
        <begin position="73"/>
        <end position="75"/>
    </location>
</feature>
<feature type="strand" evidence="14">
    <location>
        <begin position="82"/>
        <end position="85"/>
    </location>
</feature>
<feature type="turn" evidence="14">
    <location>
        <begin position="86"/>
        <end position="88"/>
    </location>
</feature>
<feature type="strand" evidence="14">
    <location>
        <begin position="91"/>
        <end position="105"/>
    </location>
</feature>
<feature type="strand" evidence="14">
    <location>
        <begin position="129"/>
        <end position="138"/>
    </location>
</feature>
<feature type="strand" evidence="14">
    <location>
        <begin position="173"/>
        <end position="178"/>
    </location>
</feature>
<feature type="strand" evidence="14">
    <location>
        <begin position="181"/>
        <end position="185"/>
    </location>
</feature>
<feature type="helix" evidence="14">
    <location>
        <begin position="196"/>
        <end position="200"/>
    </location>
</feature>
<feature type="strand" evidence="14">
    <location>
        <begin position="201"/>
        <end position="203"/>
    </location>
</feature>
<feature type="strand" evidence="14">
    <location>
        <begin position="207"/>
        <end position="213"/>
    </location>
</feature>
<feature type="helix" evidence="14">
    <location>
        <begin position="216"/>
        <end position="227"/>
    </location>
</feature>
<feature type="helix" evidence="14">
    <location>
        <begin position="228"/>
        <end position="230"/>
    </location>
</feature>
<feature type="strand" evidence="14">
    <location>
        <begin position="233"/>
        <end position="238"/>
    </location>
</feature>
<feature type="strand" evidence="14">
    <location>
        <begin position="241"/>
        <end position="252"/>
    </location>
</feature>
<feature type="strand" evidence="15">
    <location>
        <begin position="256"/>
        <end position="258"/>
    </location>
</feature>
<feature type="strand" evidence="14">
    <location>
        <begin position="261"/>
        <end position="271"/>
    </location>
</feature>
<feature type="strand" evidence="14">
    <location>
        <begin position="273"/>
        <end position="275"/>
    </location>
</feature>
<feature type="strand" evidence="14">
    <location>
        <begin position="277"/>
        <end position="288"/>
    </location>
</feature>
<feature type="strand" evidence="14">
    <location>
        <begin position="293"/>
        <end position="301"/>
    </location>
</feature>
<feature type="strand" evidence="15">
    <location>
        <begin position="307"/>
        <end position="312"/>
    </location>
</feature>
<feature type="strand" evidence="14">
    <location>
        <begin position="314"/>
        <end position="326"/>
    </location>
</feature>
<feature type="strand" evidence="14">
    <location>
        <begin position="328"/>
        <end position="337"/>
    </location>
</feature>
<feature type="strand" evidence="14">
    <location>
        <begin position="343"/>
        <end position="353"/>
    </location>
</feature>
<dbReference type="EMBL" id="AF179891">
    <property type="protein sequence ID" value="AAK92018.1"/>
    <property type="molecule type" value="mRNA"/>
</dbReference>
<dbReference type="EMBL" id="AF077203">
    <property type="protein sequence ID" value="AAD26998.1"/>
    <property type="molecule type" value="mRNA"/>
</dbReference>
<dbReference type="EMBL" id="AK313232">
    <property type="protein sequence ID" value="BAG36043.1"/>
    <property type="molecule type" value="mRNA"/>
</dbReference>
<dbReference type="EMBL" id="BC000655">
    <property type="protein sequence ID" value="AAH00655.1"/>
    <property type="molecule type" value="mRNA"/>
</dbReference>
<dbReference type="EMBL" id="BC009265">
    <property type="protein sequence ID" value="AAH09265.1"/>
    <property type="molecule type" value="mRNA"/>
</dbReference>
<dbReference type="CCDS" id="CCDS74018.1"/>
<dbReference type="RefSeq" id="NP_001277074.1">
    <property type="nucleotide sequence ID" value="NM_001290145.1"/>
</dbReference>
<dbReference type="RefSeq" id="NP_056399.1">
    <property type="nucleotide sequence ID" value="NM_015584.5"/>
</dbReference>
<dbReference type="PDB" id="6Z9C">
    <property type="method" value="X-ray"/>
    <property type="resolution" value="2.80 A"/>
    <property type="chains" value="A=51-368"/>
</dbReference>
<dbReference type="PDB" id="6ZLX">
    <property type="method" value="X-ray"/>
    <property type="resolution" value="3.39 A"/>
    <property type="chains" value="A=67-359"/>
</dbReference>
<dbReference type="PDBsum" id="6Z9C"/>
<dbReference type="PDBsum" id="6ZLX"/>
<dbReference type="SASBDB" id="Q9Y2S7"/>
<dbReference type="SMR" id="Q9Y2S7"/>
<dbReference type="BioGRID" id="117531">
    <property type="interactions" value="234"/>
</dbReference>
<dbReference type="FunCoup" id="Q9Y2S7">
    <property type="interactions" value="3249"/>
</dbReference>
<dbReference type="IntAct" id="Q9Y2S7">
    <property type="interactions" value="109"/>
</dbReference>
<dbReference type="MINT" id="Q9Y2S7"/>
<dbReference type="STRING" id="9606.ENSP00000475924"/>
<dbReference type="GlyGen" id="Q9Y2S7">
    <property type="glycosylation" value="1 site, 1 O-linked glycan (1 site)"/>
</dbReference>
<dbReference type="iPTMnet" id="Q9Y2S7"/>
<dbReference type="PhosphoSitePlus" id="Q9Y2S7"/>
<dbReference type="SwissPalm" id="Q9Y2S7"/>
<dbReference type="BioMuta" id="POLDIP2"/>
<dbReference type="jPOST" id="Q9Y2S7"/>
<dbReference type="MassIVE" id="Q9Y2S7"/>
<dbReference type="PaxDb" id="9606-ENSP00000475924"/>
<dbReference type="PeptideAtlas" id="Q9Y2S7"/>
<dbReference type="ProteomicsDB" id="85887"/>
<dbReference type="Pumba" id="Q9Y2S7"/>
<dbReference type="Antibodypedia" id="69152">
    <property type="antibodies" value="215 antibodies from 29 providers"/>
</dbReference>
<dbReference type="DNASU" id="26073"/>
<dbReference type="Ensembl" id="ENST00000540200.6">
    <property type="protein sequence ID" value="ENSP00000475924.2"/>
    <property type="gene ID" value="ENSG00000004142.12"/>
</dbReference>
<dbReference type="GeneID" id="26073"/>
<dbReference type="KEGG" id="hsa:26073"/>
<dbReference type="MANE-Select" id="ENST00000540200.6">
    <property type="protein sequence ID" value="ENSP00000475924.2"/>
    <property type="RefSeq nucleotide sequence ID" value="NM_015584.5"/>
    <property type="RefSeq protein sequence ID" value="NP_056399.1"/>
</dbReference>
<dbReference type="UCSC" id="uc032ezc.2">
    <property type="organism name" value="human"/>
</dbReference>
<dbReference type="AGR" id="HGNC:23781"/>
<dbReference type="CTD" id="26073"/>
<dbReference type="DisGeNET" id="26073"/>
<dbReference type="GeneCards" id="POLDIP2"/>
<dbReference type="HGNC" id="HGNC:23781">
    <property type="gene designation" value="POLDIP2"/>
</dbReference>
<dbReference type="HPA" id="ENSG00000004142">
    <property type="expression patterns" value="Low tissue specificity"/>
</dbReference>
<dbReference type="MIM" id="611519">
    <property type="type" value="gene"/>
</dbReference>
<dbReference type="neXtProt" id="NX_Q9Y2S7"/>
<dbReference type="OpenTargets" id="ENSG00000004142"/>
<dbReference type="PharmGKB" id="PA134866227"/>
<dbReference type="VEuPathDB" id="HostDB:ENSG00000004142"/>
<dbReference type="eggNOG" id="KOG4408">
    <property type="taxonomic scope" value="Eukaryota"/>
</dbReference>
<dbReference type="GeneTree" id="ENSGT00940000153571"/>
<dbReference type="HOGENOM" id="CLU_051858_0_0_1"/>
<dbReference type="InParanoid" id="Q9Y2S7"/>
<dbReference type="OMA" id="IMPYSST"/>
<dbReference type="OrthoDB" id="5913487at2759"/>
<dbReference type="PAN-GO" id="Q9Y2S7">
    <property type="GO annotations" value="3 GO annotations based on evolutionary models"/>
</dbReference>
<dbReference type="PhylomeDB" id="Q9Y2S7"/>
<dbReference type="PathwayCommons" id="Q9Y2S7"/>
<dbReference type="SignaLink" id="Q9Y2S7"/>
<dbReference type="BioGRID-ORCS" id="26073">
    <property type="hits" value="13 hits in 309 CRISPR screens"/>
</dbReference>
<dbReference type="ChiTaRS" id="POLDIP2">
    <property type="organism name" value="human"/>
</dbReference>
<dbReference type="GeneWiki" id="POLDIP2"/>
<dbReference type="GenomeRNAi" id="26073"/>
<dbReference type="Pharos" id="Q9Y2S7">
    <property type="development level" value="Tbio"/>
</dbReference>
<dbReference type="PRO" id="PR:Q9Y2S7"/>
<dbReference type="Proteomes" id="UP000005640">
    <property type="component" value="Chromosome 17"/>
</dbReference>
<dbReference type="RNAct" id="Q9Y2S7">
    <property type="molecule type" value="protein"/>
</dbReference>
<dbReference type="Bgee" id="ENSG00000004142">
    <property type="expression patterns" value="Expressed in gastrocnemius and 200 other cell types or tissues"/>
</dbReference>
<dbReference type="ExpressionAtlas" id="Q9Y2S7">
    <property type="expression patterns" value="baseline and differential"/>
</dbReference>
<dbReference type="GO" id="GO:0005911">
    <property type="term" value="C:cell-cell junction"/>
    <property type="evidence" value="ECO:0007669"/>
    <property type="project" value="Ensembl"/>
</dbReference>
<dbReference type="GO" id="GO:0030496">
    <property type="term" value="C:midbody"/>
    <property type="evidence" value="ECO:0007669"/>
    <property type="project" value="Ensembl"/>
</dbReference>
<dbReference type="GO" id="GO:0005759">
    <property type="term" value="C:mitochondrial matrix"/>
    <property type="evidence" value="ECO:0000314"/>
    <property type="project" value="UniProtKB"/>
</dbReference>
<dbReference type="GO" id="GO:0042645">
    <property type="term" value="C:mitochondrial nucleoid"/>
    <property type="evidence" value="ECO:0000314"/>
    <property type="project" value="BHF-UCL"/>
</dbReference>
<dbReference type="GO" id="GO:0005739">
    <property type="term" value="C:mitochondrion"/>
    <property type="evidence" value="ECO:0000314"/>
    <property type="project" value="LIFEdb"/>
</dbReference>
<dbReference type="GO" id="GO:0072686">
    <property type="term" value="C:mitotic spindle"/>
    <property type="evidence" value="ECO:0007669"/>
    <property type="project" value="Ensembl"/>
</dbReference>
<dbReference type="GO" id="GO:0005634">
    <property type="term" value="C:nucleus"/>
    <property type="evidence" value="ECO:0000314"/>
    <property type="project" value="UniProtKB"/>
</dbReference>
<dbReference type="GO" id="GO:0003677">
    <property type="term" value="F:DNA binding"/>
    <property type="evidence" value="ECO:0007669"/>
    <property type="project" value="InterPro"/>
</dbReference>
<dbReference type="GO" id="GO:0070987">
    <property type="term" value="P:error-free translesion synthesis"/>
    <property type="evidence" value="ECO:0000314"/>
    <property type="project" value="UniProtKB"/>
</dbReference>
<dbReference type="GO" id="GO:0007005">
    <property type="term" value="P:mitochondrion organization"/>
    <property type="evidence" value="ECO:0007669"/>
    <property type="project" value="Ensembl"/>
</dbReference>
<dbReference type="GO" id="GO:0090307">
    <property type="term" value="P:mitotic spindle assembly"/>
    <property type="evidence" value="ECO:0007669"/>
    <property type="project" value="Ensembl"/>
</dbReference>
<dbReference type="GO" id="GO:0016242">
    <property type="term" value="P:negative regulation of macroautophagy"/>
    <property type="evidence" value="ECO:0007669"/>
    <property type="project" value="Ensembl"/>
</dbReference>
<dbReference type="GO" id="GO:0051894">
    <property type="term" value="P:positive regulation of focal adhesion assembly"/>
    <property type="evidence" value="ECO:0007669"/>
    <property type="project" value="Ensembl"/>
</dbReference>
<dbReference type="GO" id="GO:0045931">
    <property type="term" value="P:positive regulation of mitotic cell cycle"/>
    <property type="evidence" value="ECO:0007669"/>
    <property type="project" value="Ensembl"/>
</dbReference>
<dbReference type="GO" id="GO:1903490">
    <property type="term" value="P:positive regulation of mitotic cytokinesis"/>
    <property type="evidence" value="ECO:0007669"/>
    <property type="project" value="Ensembl"/>
</dbReference>
<dbReference type="GO" id="GO:1990874">
    <property type="term" value="P:vascular associated smooth muscle cell proliferation"/>
    <property type="evidence" value="ECO:0007669"/>
    <property type="project" value="Ensembl"/>
</dbReference>
<dbReference type="FunFam" id="2.60.40.1470:FF:000001">
    <property type="entry name" value="DNA polymerase delta-interacting protein 2"/>
    <property type="match status" value="1"/>
</dbReference>
<dbReference type="Gene3D" id="2.60.40.1470">
    <property type="entry name" value="ApaG domain"/>
    <property type="match status" value="1"/>
</dbReference>
<dbReference type="InterPro" id="IPR007474">
    <property type="entry name" value="ApaG_domain"/>
</dbReference>
<dbReference type="InterPro" id="IPR036767">
    <property type="entry name" value="ApaG_sf"/>
</dbReference>
<dbReference type="InterPro" id="IPR011722">
    <property type="entry name" value="Hemimethylated_DNA-bd_dom"/>
</dbReference>
<dbReference type="InterPro" id="IPR036623">
    <property type="entry name" value="Hemimethylated_DNA-bd_sf"/>
</dbReference>
<dbReference type="NCBIfam" id="NF003967">
    <property type="entry name" value="PRK05461.1"/>
    <property type="match status" value="1"/>
</dbReference>
<dbReference type="PANTHER" id="PTHR14289">
    <property type="entry name" value="F-BOX ONLY PROTEIN 3"/>
    <property type="match status" value="1"/>
</dbReference>
<dbReference type="PANTHER" id="PTHR14289:SF16">
    <property type="entry name" value="POLYMERASE DELTA-INTERACTING PROTEIN 2"/>
    <property type="match status" value="1"/>
</dbReference>
<dbReference type="Pfam" id="PF04379">
    <property type="entry name" value="DUF525"/>
    <property type="match status" value="1"/>
</dbReference>
<dbReference type="Pfam" id="PF08755">
    <property type="entry name" value="YccV-like"/>
    <property type="match status" value="1"/>
</dbReference>
<dbReference type="SMART" id="SM00992">
    <property type="entry name" value="YccV-like"/>
    <property type="match status" value="1"/>
</dbReference>
<dbReference type="SUPFAM" id="SSF110069">
    <property type="entry name" value="ApaG-like"/>
    <property type="match status" value="1"/>
</dbReference>
<dbReference type="SUPFAM" id="SSF141255">
    <property type="entry name" value="YccV-like"/>
    <property type="match status" value="1"/>
</dbReference>
<dbReference type="PROSITE" id="PS51087">
    <property type="entry name" value="APAG"/>
    <property type="match status" value="1"/>
</dbReference>